<reference key="1">
    <citation type="submission" date="2002-12" db="EMBL/GenBank/DDBJ databases">
        <title>Complete genome sequence of Vibrio vulnificus CMCP6.</title>
        <authorList>
            <person name="Rhee J.H."/>
            <person name="Kim S.Y."/>
            <person name="Chung S.S."/>
            <person name="Kim J.J."/>
            <person name="Moon Y.H."/>
            <person name="Jeong H."/>
            <person name="Choy H.E."/>
        </authorList>
    </citation>
    <scope>NUCLEOTIDE SEQUENCE [LARGE SCALE GENOMIC DNA]</scope>
    <source>
        <strain>CMCP6</strain>
    </source>
</reference>
<gene>
    <name evidence="1" type="primary">clpP</name>
    <name type="ordered locus">VV1_0023</name>
</gene>
<dbReference type="EC" id="3.4.21.92" evidence="1"/>
<dbReference type="EMBL" id="AE016795">
    <property type="protein sequence ID" value="AAO08567.1"/>
    <property type="status" value="ALT_INIT"/>
    <property type="molecule type" value="Genomic_DNA"/>
</dbReference>
<dbReference type="SMR" id="Q8DG26"/>
<dbReference type="MEROPS" id="S14.001"/>
<dbReference type="KEGG" id="vvu:VV1_0023"/>
<dbReference type="HOGENOM" id="CLU_058707_3_2_6"/>
<dbReference type="Proteomes" id="UP000002275">
    <property type="component" value="Chromosome 1"/>
</dbReference>
<dbReference type="GO" id="GO:0005737">
    <property type="term" value="C:cytoplasm"/>
    <property type="evidence" value="ECO:0007669"/>
    <property type="project" value="UniProtKB-SubCell"/>
</dbReference>
<dbReference type="GO" id="GO:0009368">
    <property type="term" value="C:endopeptidase Clp complex"/>
    <property type="evidence" value="ECO:0007669"/>
    <property type="project" value="TreeGrafter"/>
</dbReference>
<dbReference type="GO" id="GO:0004176">
    <property type="term" value="F:ATP-dependent peptidase activity"/>
    <property type="evidence" value="ECO:0007669"/>
    <property type="project" value="InterPro"/>
</dbReference>
<dbReference type="GO" id="GO:0051117">
    <property type="term" value="F:ATPase binding"/>
    <property type="evidence" value="ECO:0007669"/>
    <property type="project" value="TreeGrafter"/>
</dbReference>
<dbReference type="GO" id="GO:0004252">
    <property type="term" value="F:serine-type endopeptidase activity"/>
    <property type="evidence" value="ECO:0007669"/>
    <property type="project" value="UniProtKB-UniRule"/>
</dbReference>
<dbReference type="GO" id="GO:0006515">
    <property type="term" value="P:protein quality control for misfolded or incompletely synthesized proteins"/>
    <property type="evidence" value="ECO:0007669"/>
    <property type="project" value="TreeGrafter"/>
</dbReference>
<dbReference type="CDD" id="cd07017">
    <property type="entry name" value="S14_ClpP_2"/>
    <property type="match status" value="1"/>
</dbReference>
<dbReference type="FunFam" id="3.90.226.10:FF:000001">
    <property type="entry name" value="ATP-dependent Clp protease proteolytic subunit"/>
    <property type="match status" value="1"/>
</dbReference>
<dbReference type="Gene3D" id="3.90.226.10">
    <property type="entry name" value="2-enoyl-CoA Hydratase, Chain A, domain 1"/>
    <property type="match status" value="1"/>
</dbReference>
<dbReference type="HAMAP" id="MF_00444">
    <property type="entry name" value="ClpP"/>
    <property type="match status" value="1"/>
</dbReference>
<dbReference type="InterPro" id="IPR001907">
    <property type="entry name" value="ClpP"/>
</dbReference>
<dbReference type="InterPro" id="IPR029045">
    <property type="entry name" value="ClpP/crotonase-like_dom_sf"/>
</dbReference>
<dbReference type="InterPro" id="IPR023562">
    <property type="entry name" value="ClpP/TepA"/>
</dbReference>
<dbReference type="InterPro" id="IPR033135">
    <property type="entry name" value="ClpP_His_AS"/>
</dbReference>
<dbReference type="InterPro" id="IPR018215">
    <property type="entry name" value="ClpP_Ser_AS"/>
</dbReference>
<dbReference type="NCBIfam" id="TIGR00493">
    <property type="entry name" value="clpP"/>
    <property type="match status" value="1"/>
</dbReference>
<dbReference type="NCBIfam" id="NF001368">
    <property type="entry name" value="PRK00277.1"/>
    <property type="match status" value="1"/>
</dbReference>
<dbReference type="NCBIfam" id="NF009205">
    <property type="entry name" value="PRK12553.1"/>
    <property type="match status" value="1"/>
</dbReference>
<dbReference type="PANTHER" id="PTHR10381">
    <property type="entry name" value="ATP-DEPENDENT CLP PROTEASE PROTEOLYTIC SUBUNIT"/>
    <property type="match status" value="1"/>
</dbReference>
<dbReference type="PANTHER" id="PTHR10381:SF70">
    <property type="entry name" value="ATP-DEPENDENT CLP PROTEASE PROTEOLYTIC SUBUNIT"/>
    <property type="match status" value="1"/>
</dbReference>
<dbReference type="Pfam" id="PF00574">
    <property type="entry name" value="CLP_protease"/>
    <property type="match status" value="1"/>
</dbReference>
<dbReference type="PRINTS" id="PR00127">
    <property type="entry name" value="CLPPROTEASEP"/>
</dbReference>
<dbReference type="SUPFAM" id="SSF52096">
    <property type="entry name" value="ClpP/crotonase"/>
    <property type="match status" value="1"/>
</dbReference>
<dbReference type="PROSITE" id="PS00382">
    <property type="entry name" value="CLP_PROTEASE_HIS"/>
    <property type="match status" value="1"/>
</dbReference>
<dbReference type="PROSITE" id="PS00381">
    <property type="entry name" value="CLP_PROTEASE_SER"/>
    <property type="match status" value="1"/>
</dbReference>
<keyword id="KW-0963">Cytoplasm</keyword>
<keyword id="KW-0378">Hydrolase</keyword>
<keyword id="KW-0645">Protease</keyword>
<keyword id="KW-0720">Serine protease</keyword>
<organism>
    <name type="scientific">Vibrio vulnificus (strain CMCP6)</name>
    <dbReference type="NCBI Taxonomy" id="216895"/>
    <lineage>
        <taxon>Bacteria</taxon>
        <taxon>Pseudomonadati</taxon>
        <taxon>Pseudomonadota</taxon>
        <taxon>Gammaproteobacteria</taxon>
        <taxon>Vibrionales</taxon>
        <taxon>Vibrionaceae</taxon>
        <taxon>Vibrio</taxon>
    </lineage>
</organism>
<proteinExistence type="inferred from homology"/>
<comment type="function">
    <text evidence="1">Cleaves peptides in various proteins in a process that requires ATP hydrolysis. Has a chymotrypsin-like activity. Plays a major role in the degradation of misfolded proteins.</text>
</comment>
<comment type="catalytic activity">
    <reaction evidence="1">
        <text>Hydrolysis of proteins to small peptides in the presence of ATP and magnesium. alpha-casein is the usual test substrate. In the absence of ATP, only oligopeptides shorter than five residues are hydrolyzed (such as succinyl-Leu-Tyr-|-NHMec, and Leu-Tyr-Leu-|-Tyr-Trp, in which cleavage of the -Tyr-|-Leu- and -Tyr-|-Trp bonds also occurs).</text>
        <dbReference type="EC" id="3.4.21.92"/>
    </reaction>
</comment>
<comment type="subunit">
    <text evidence="1">Fourteen ClpP subunits assemble into 2 heptameric rings which stack back to back to give a disk-like structure with a central cavity, resembling the structure of eukaryotic proteasomes.</text>
</comment>
<comment type="subcellular location">
    <subcellularLocation>
        <location evidence="1">Cytoplasm</location>
    </subcellularLocation>
</comment>
<comment type="similarity">
    <text evidence="1">Belongs to the peptidase S14 family.</text>
</comment>
<comment type="sequence caution" evidence="2">
    <conflict type="erroneous initiation">
        <sequence resource="EMBL-CDS" id="AAO08567"/>
    </conflict>
</comment>
<protein>
    <recommendedName>
        <fullName evidence="1">ATP-dependent Clp protease proteolytic subunit</fullName>
        <ecNumber evidence="1">3.4.21.92</ecNumber>
    </recommendedName>
    <alternativeName>
        <fullName evidence="1">Endopeptidase Clp</fullName>
    </alternativeName>
</protein>
<accession>Q8DG26</accession>
<feature type="chain" id="PRO_0000179713" description="ATP-dependent Clp protease proteolytic subunit">
    <location>
        <begin position="1"/>
        <end position="200"/>
    </location>
</feature>
<feature type="active site" description="Nucleophile" evidence="1">
    <location>
        <position position="103"/>
    </location>
</feature>
<feature type="active site" evidence="1">
    <location>
        <position position="128"/>
    </location>
</feature>
<evidence type="ECO:0000255" key="1">
    <source>
        <dbReference type="HAMAP-Rule" id="MF_00444"/>
    </source>
</evidence>
<evidence type="ECO:0000305" key="2"/>
<name>CLPP_VIBVU</name>
<sequence length="200" mass="22000">MSPIIDALVPMVVEQTSRGERSYDIYSRLLKERVIFLTGQVEDHMANLVVAQLLFLESENPDKDIFLYINSPGGSVTAGMSIYDTMQFIKPNVSTVCMGQACSMGAFLLAGGAPGKRYVLPNSRVMIHQPLGGFQGQASDIQIHAQEILTIKTKLNKLLAEHTGQPLEVIERDTDRDNFMSADQAVEYGLVDAVLTHRSA</sequence>